<protein>
    <recommendedName>
        <fullName>Putative uncharacterized protein PRO3102</fullName>
    </recommendedName>
</protein>
<gene>
    <name type="ORF">PRO3102</name>
</gene>
<feature type="chain" id="PRO_0000326126" description="Putative uncharacterized protein PRO3102">
    <location>
        <begin position="1"/>
        <end position="93"/>
    </location>
</feature>
<proteinExistence type="uncertain"/>
<evidence type="ECO:0000305" key="1"/>
<comment type="caution">
    <text evidence="1">Could be the product of a pseudogene.</text>
</comment>
<dbReference type="EMBL" id="AF130099">
    <property type="protein sequence ID" value="AAG35524.1"/>
    <property type="molecule type" value="mRNA"/>
</dbReference>
<dbReference type="EMBL" id="CH471174">
    <property type="protein sequence ID" value="EAW92614.1"/>
    <property type="molecule type" value="Genomic_DNA"/>
</dbReference>
<dbReference type="GlyGen" id="Q9H379">
    <property type="glycosylation" value="1 site, 1 O-linked glycan (1 site)"/>
</dbReference>
<dbReference type="BioMuta" id="PRO3102"/>
<dbReference type="neXtProt" id="NX_Q9H379"/>
<dbReference type="InParanoid" id="Q9H379"/>
<dbReference type="PAN-GO" id="Q9H379">
    <property type="GO annotations" value="0 GO annotations based on evolutionary models"/>
</dbReference>
<dbReference type="Pharos" id="Q9H379">
    <property type="development level" value="Tdark"/>
</dbReference>
<dbReference type="Proteomes" id="UP000005640">
    <property type="component" value="Unplaced"/>
</dbReference>
<dbReference type="RNAct" id="Q9H379">
    <property type="molecule type" value="protein"/>
</dbReference>
<keyword id="KW-1185">Reference proteome</keyword>
<reference key="1">
    <citation type="submission" date="1999-02" db="EMBL/GenBank/DDBJ databases">
        <title>Functional prediction of the coding sequences of 75 new genes deduced by analysis of cDNA clones from human fetal liver.</title>
        <authorList>
            <person name="Zhang C."/>
            <person name="Yu Y."/>
            <person name="Zhang S."/>
            <person name="Wei H."/>
            <person name="Bi J."/>
            <person name="Zhou G."/>
            <person name="Dong C."/>
            <person name="Zai Y."/>
            <person name="Xu W."/>
            <person name="Gao F."/>
            <person name="Liu M."/>
            <person name="He F."/>
        </authorList>
    </citation>
    <scope>NUCLEOTIDE SEQUENCE [LARGE SCALE MRNA]</scope>
    <source>
        <tissue>Fetal liver</tissue>
    </source>
</reference>
<reference key="2">
    <citation type="submission" date="2005-07" db="EMBL/GenBank/DDBJ databases">
        <authorList>
            <person name="Mural R.J."/>
            <person name="Istrail S."/>
            <person name="Sutton G.G."/>
            <person name="Florea L."/>
            <person name="Halpern A.L."/>
            <person name="Mobarry C.M."/>
            <person name="Lippert R."/>
            <person name="Walenz B."/>
            <person name="Shatkay H."/>
            <person name="Dew I."/>
            <person name="Miller J.R."/>
            <person name="Flanigan M.J."/>
            <person name="Edwards N.J."/>
            <person name="Bolanos R."/>
            <person name="Fasulo D."/>
            <person name="Halldorsson B.V."/>
            <person name="Hannenhalli S."/>
            <person name="Turner R."/>
            <person name="Yooseph S."/>
            <person name="Lu F."/>
            <person name="Nusskern D.R."/>
            <person name="Shue B.C."/>
            <person name="Zheng X.H."/>
            <person name="Zhong F."/>
            <person name="Delcher A.L."/>
            <person name="Huson D.H."/>
            <person name="Kravitz S.A."/>
            <person name="Mouchard L."/>
            <person name="Reinert K."/>
            <person name="Remington K.A."/>
            <person name="Clark A.G."/>
            <person name="Waterman M.S."/>
            <person name="Eichler E.E."/>
            <person name="Adams M.D."/>
            <person name="Hunkapiller M.W."/>
            <person name="Myers E.W."/>
            <person name="Venter J.C."/>
        </authorList>
    </citation>
    <scope>NUCLEOTIDE SEQUENCE [LARGE SCALE GENOMIC DNA]</scope>
</reference>
<accession>Q9H379</accession>
<organism>
    <name type="scientific">Homo sapiens</name>
    <name type="common">Human</name>
    <dbReference type="NCBI Taxonomy" id="9606"/>
    <lineage>
        <taxon>Eukaryota</taxon>
        <taxon>Metazoa</taxon>
        <taxon>Chordata</taxon>
        <taxon>Craniata</taxon>
        <taxon>Vertebrata</taxon>
        <taxon>Euteleostomi</taxon>
        <taxon>Mammalia</taxon>
        <taxon>Eutheria</taxon>
        <taxon>Euarchontoglires</taxon>
        <taxon>Primates</taxon>
        <taxon>Haplorrhini</taxon>
        <taxon>Catarrhini</taxon>
        <taxon>Hominidae</taxon>
        <taxon>Homo</taxon>
    </lineage>
</organism>
<sequence>MPLASPIQHHEVTRGVAPSMALRDGVCRIPLSAEFTAQCTDSQAPQMKRAPRCCCLAVVAQCPHHCPVLGCWSGCRCCCYCVFELHWLYCIQE</sequence>
<name>YI012_HUMAN</name>